<dbReference type="EC" id="2.5.1.32" evidence="3"/>
<dbReference type="EMBL" id="L25812">
    <property type="protein sequence ID" value="AAA32836.1"/>
    <property type="molecule type" value="mRNA"/>
</dbReference>
<dbReference type="EMBL" id="AF009954">
    <property type="protein sequence ID" value="AAB65697.1"/>
    <property type="molecule type" value="Genomic_DNA"/>
</dbReference>
<dbReference type="EMBL" id="AB005238">
    <property type="protein sequence ID" value="BAB10510.1"/>
    <property type="molecule type" value="Genomic_DNA"/>
</dbReference>
<dbReference type="EMBL" id="CP002688">
    <property type="protein sequence ID" value="AED92399.1"/>
    <property type="molecule type" value="Genomic_DNA"/>
</dbReference>
<dbReference type="EMBL" id="CP002688">
    <property type="protein sequence ID" value="AED92400.1"/>
    <property type="molecule type" value="Genomic_DNA"/>
</dbReference>
<dbReference type="EMBL" id="CP002688">
    <property type="protein sequence ID" value="ANM69856.1"/>
    <property type="molecule type" value="Genomic_DNA"/>
</dbReference>
<dbReference type="EMBL" id="BT000450">
    <property type="protein sequence ID" value="AAN17427.1"/>
    <property type="molecule type" value="mRNA"/>
</dbReference>
<dbReference type="EMBL" id="BT002084">
    <property type="protein sequence ID" value="AAN72095.1"/>
    <property type="molecule type" value="mRNA"/>
</dbReference>
<dbReference type="EMBL" id="AY085565">
    <property type="protein sequence ID" value="AAM62787.1"/>
    <property type="molecule type" value="mRNA"/>
</dbReference>
<dbReference type="RefSeq" id="NP_001031895.1">
    <molecule id="P37271-1"/>
    <property type="nucleotide sequence ID" value="NM_001036818.2"/>
</dbReference>
<dbReference type="RefSeq" id="NP_001331504.1">
    <molecule id="P37271-1"/>
    <property type="nucleotide sequence ID" value="NM_001343484.1"/>
</dbReference>
<dbReference type="RefSeq" id="NP_197225.1">
    <molecule id="P37271-1"/>
    <property type="nucleotide sequence ID" value="NM_121729.3"/>
</dbReference>
<dbReference type="SMR" id="P37271"/>
<dbReference type="BioGRID" id="16863">
    <property type="interactions" value="3"/>
</dbReference>
<dbReference type="FunCoup" id="P37271">
    <property type="interactions" value="239"/>
</dbReference>
<dbReference type="STRING" id="3702.P37271"/>
<dbReference type="iPTMnet" id="P37271"/>
<dbReference type="PaxDb" id="3702-AT5G17230.3"/>
<dbReference type="ProteomicsDB" id="248672">
    <molecule id="P37271-1"/>
</dbReference>
<dbReference type="EnsemblPlants" id="AT5G17230.1">
    <molecule id="P37271-1"/>
    <property type="protein sequence ID" value="AT5G17230.1"/>
    <property type="gene ID" value="AT5G17230"/>
</dbReference>
<dbReference type="EnsemblPlants" id="AT5G17230.2">
    <molecule id="P37271-1"/>
    <property type="protein sequence ID" value="AT5G17230.2"/>
    <property type="gene ID" value="AT5G17230"/>
</dbReference>
<dbReference type="EnsemblPlants" id="AT5G17230.4">
    <molecule id="P37271-1"/>
    <property type="protein sequence ID" value="AT5G17230.4"/>
    <property type="gene ID" value="AT5G17230"/>
</dbReference>
<dbReference type="GeneID" id="831587"/>
<dbReference type="Gramene" id="AT5G17230.1">
    <molecule id="P37271-1"/>
    <property type="protein sequence ID" value="AT5G17230.1"/>
    <property type="gene ID" value="AT5G17230"/>
</dbReference>
<dbReference type="Gramene" id="AT5G17230.2">
    <molecule id="P37271-1"/>
    <property type="protein sequence ID" value="AT5G17230.2"/>
    <property type="gene ID" value="AT5G17230"/>
</dbReference>
<dbReference type="Gramene" id="AT5G17230.4">
    <molecule id="P37271-1"/>
    <property type="protein sequence ID" value="AT5G17230.4"/>
    <property type="gene ID" value="AT5G17230"/>
</dbReference>
<dbReference type="KEGG" id="ath:AT5G17230"/>
<dbReference type="Araport" id="AT5G17230"/>
<dbReference type="TAIR" id="AT5G17230">
    <property type="gene designation" value="PSY"/>
</dbReference>
<dbReference type="eggNOG" id="KOG1459">
    <property type="taxonomic scope" value="Eukaryota"/>
</dbReference>
<dbReference type="InParanoid" id="P37271"/>
<dbReference type="OMA" id="KLYCYRV"/>
<dbReference type="PhylomeDB" id="P37271"/>
<dbReference type="BioCyc" id="ARA:AT5G17230-MONOMER"/>
<dbReference type="BioCyc" id="MetaCyc:AT5G17230-MONOMER"/>
<dbReference type="BRENDA" id="2.5.1.32">
    <property type="organism ID" value="399"/>
</dbReference>
<dbReference type="UniPathway" id="UPA00799">
    <property type="reaction ID" value="UER00773"/>
</dbReference>
<dbReference type="PRO" id="PR:P37271"/>
<dbReference type="Proteomes" id="UP000006548">
    <property type="component" value="Chromosome 5"/>
</dbReference>
<dbReference type="ExpressionAtlas" id="P37271">
    <property type="expression patterns" value="baseline and differential"/>
</dbReference>
<dbReference type="GO" id="GO:0009507">
    <property type="term" value="C:chloroplast"/>
    <property type="evidence" value="ECO:0000314"/>
    <property type="project" value="UniProtKB"/>
</dbReference>
<dbReference type="GO" id="GO:0031969">
    <property type="term" value="C:chloroplast membrane"/>
    <property type="evidence" value="ECO:0007669"/>
    <property type="project" value="UniProtKB-SubCell"/>
</dbReference>
<dbReference type="GO" id="GO:0046905">
    <property type="term" value="F:15-cis-phytoene synthase activity"/>
    <property type="evidence" value="ECO:0000314"/>
    <property type="project" value="UniProtKB"/>
</dbReference>
<dbReference type="GO" id="GO:0004311">
    <property type="term" value="F:geranylgeranyl diphosphate synthase activity"/>
    <property type="evidence" value="ECO:0007669"/>
    <property type="project" value="InterPro"/>
</dbReference>
<dbReference type="GO" id="GO:0051996">
    <property type="term" value="F:squalene synthase [NAD(P)H] activity"/>
    <property type="evidence" value="ECO:0007669"/>
    <property type="project" value="InterPro"/>
</dbReference>
<dbReference type="GO" id="GO:0016117">
    <property type="term" value="P:carotenoid biosynthetic process"/>
    <property type="evidence" value="ECO:0000314"/>
    <property type="project" value="UniProtKB"/>
</dbReference>
<dbReference type="CDD" id="cd00683">
    <property type="entry name" value="Trans_IPPS_HH"/>
    <property type="match status" value="1"/>
</dbReference>
<dbReference type="FunFam" id="1.10.600.10:FF:000004">
    <property type="entry name" value="Phytoene synthase chloroplastic"/>
    <property type="match status" value="1"/>
</dbReference>
<dbReference type="Gene3D" id="1.10.600.10">
    <property type="entry name" value="Farnesyl Diphosphate Synthase"/>
    <property type="match status" value="1"/>
</dbReference>
<dbReference type="InterPro" id="IPR008949">
    <property type="entry name" value="Isoprenoid_synthase_dom_sf"/>
</dbReference>
<dbReference type="InterPro" id="IPR002060">
    <property type="entry name" value="Squ/phyt_synthse"/>
</dbReference>
<dbReference type="InterPro" id="IPR019845">
    <property type="entry name" value="Squalene/phytoene_synthase_CS"/>
</dbReference>
<dbReference type="InterPro" id="IPR044843">
    <property type="entry name" value="Trans_IPPS_bact-type"/>
</dbReference>
<dbReference type="InterPro" id="IPR033904">
    <property type="entry name" value="Trans_IPPS_HH"/>
</dbReference>
<dbReference type="PANTHER" id="PTHR31480">
    <property type="entry name" value="BIFUNCTIONAL LYCOPENE CYCLASE/PHYTOENE SYNTHASE"/>
    <property type="match status" value="1"/>
</dbReference>
<dbReference type="Pfam" id="PF00494">
    <property type="entry name" value="SQS_PSY"/>
    <property type="match status" value="1"/>
</dbReference>
<dbReference type="SFLD" id="SFLDG01212">
    <property type="entry name" value="Phytoene_synthase_like"/>
    <property type="match status" value="1"/>
</dbReference>
<dbReference type="SFLD" id="SFLDG01018">
    <property type="entry name" value="Squalene/Phytoene_Synthase_Lik"/>
    <property type="match status" value="1"/>
</dbReference>
<dbReference type="SUPFAM" id="SSF48576">
    <property type="entry name" value="Terpenoid synthases"/>
    <property type="match status" value="1"/>
</dbReference>
<dbReference type="PROSITE" id="PS01044">
    <property type="entry name" value="SQUALEN_PHYTOEN_SYN_1"/>
    <property type="match status" value="1"/>
</dbReference>
<dbReference type="PROSITE" id="PS01045">
    <property type="entry name" value="SQUALEN_PHYTOEN_SYN_2"/>
    <property type="match status" value="1"/>
</dbReference>
<protein>
    <recommendedName>
        <fullName evidence="5 6">Phytoene synthase 1, chloroplastic</fullName>
        <ecNumber evidence="3">2.5.1.32</ecNumber>
    </recommendedName>
</protein>
<gene>
    <name evidence="5" type="primary">PSY1</name>
    <name evidence="6" type="synonym">PSY</name>
    <name evidence="8" type="ordered locus">At5g17230</name>
    <name evidence="9" type="ORF">MKP11.8</name>
</gene>
<accession>P37271</accession>
<accession>O22375</accession>
<accession>Q8LE86</accession>
<feature type="transit peptide" description="Chloroplast" evidence="2">
    <location>
        <begin position="1"/>
        <end position="70"/>
    </location>
</feature>
<feature type="chain" id="PRO_0000029852" description="Phytoene synthase 1, chloroplastic">
    <location>
        <begin position="71"/>
        <end position="422"/>
    </location>
</feature>
<feature type="sequence conflict" description="In Ref. 6; AAM62787." evidence="7" ref="6">
    <original>R</original>
    <variation>M</variation>
    <location>
        <position position="60"/>
    </location>
</feature>
<feature type="sequence conflict" description="In Ref. 1; AAA32836." evidence="7" ref="1">
    <original>L</original>
    <variation>LV</variation>
    <location>
        <position position="128"/>
    </location>
</feature>
<feature type="sequence conflict" description="In Ref. 1; AAA32836." evidence="7" ref="1">
    <original>A</original>
    <variation>P</variation>
    <location>
        <position position="143"/>
    </location>
</feature>
<evidence type="ECO:0000250" key="1"/>
<evidence type="ECO:0000255" key="2"/>
<evidence type="ECO:0000269" key="3">
    <source>
    </source>
</evidence>
<evidence type="ECO:0000269" key="4">
    <source>
    </source>
</evidence>
<evidence type="ECO:0000303" key="5">
    <source>
    </source>
</evidence>
<evidence type="ECO:0000303" key="6">
    <source ref="2"/>
</evidence>
<evidence type="ECO:0000305" key="7"/>
<evidence type="ECO:0000312" key="8">
    <source>
        <dbReference type="Araport" id="AT5G17230"/>
    </source>
</evidence>
<evidence type="ECO:0000312" key="9">
    <source>
        <dbReference type="EMBL" id="BAB10510.1"/>
    </source>
</evidence>
<name>PSY_ARATH</name>
<reference key="1">
    <citation type="journal article" date="1994" name="Plant Physiol.">
        <title>Nucleotide sequence of an Arabidopsis cDNA for phytoene synthase.</title>
        <authorList>
            <person name="Scolnik P.A."/>
            <person name="Bartley G.E."/>
        </authorList>
    </citation>
    <scope>NUCLEOTIDE SEQUENCE [MRNA]</scope>
    <source>
        <strain>cv. Columbia</strain>
        <tissue>Etiolated seedling</tissue>
    </source>
</reference>
<reference key="2">
    <citation type="submission" date="1997-06" db="EMBL/GenBank/DDBJ databases">
        <title>Sequence of the phytoene synthase gene of Arabidopsis.</title>
        <authorList>
            <person name="Castrignano F."/>
            <person name="Giuliano G."/>
        </authorList>
    </citation>
    <scope>NUCLEOTIDE SEQUENCE [GENOMIC DNA]</scope>
    <source>
        <strain>cv. Columbia</strain>
    </source>
</reference>
<reference key="3">
    <citation type="journal article" date="1997" name="DNA Res.">
        <title>Structural analysis of Arabidopsis thaliana chromosome 5. I. Sequence features of the 1.6 Mb regions covered by twenty physically assigned P1 clones.</title>
        <authorList>
            <person name="Sato S."/>
            <person name="Kotani H."/>
            <person name="Nakamura Y."/>
            <person name="Kaneko T."/>
            <person name="Asamizu E."/>
            <person name="Fukami M."/>
            <person name="Miyajima N."/>
            <person name="Tabata S."/>
        </authorList>
    </citation>
    <scope>NUCLEOTIDE SEQUENCE [LARGE SCALE GENOMIC DNA]</scope>
    <source>
        <strain>cv. Columbia</strain>
    </source>
</reference>
<reference key="4">
    <citation type="journal article" date="2017" name="Plant J.">
        <title>Araport11: a complete reannotation of the Arabidopsis thaliana reference genome.</title>
        <authorList>
            <person name="Cheng C.Y."/>
            <person name="Krishnakumar V."/>
            <person name="Chan A.P."/>
            <person name="Thibaud-Nissen F."/>
            <person name="Schobel S."/>
            <person name="Town C.D."/>
        </authorList>
    </citation>
    <scope>GENOME REANNOTATION</scope>
    <source>
        <strain>cv. Columbia</strain>
    </source>
</reference>
<reference key="5">
    <citation type="journal article" date="2003" name="Science">
        <title>Empirical analysis of transcriptional activity in the Arabidopsis genome.</title>
        <authorList>
            <person name="Yamada K."/>
            <person name="Lim J."/>
            <person name="Dale J.M."/>
            <person name="Chen H."/>
            <person name="Shinn P."/>
            <person name="Palm C.J."/>
            <person name="Southwick A.M."/>
            <person name="Wu H.C."/>
            <person name="Kim C.J."/>
            <person name="Nguyen M."/>
            <person name="Pham P.K."/>
            <person name="Cheuk R.F."/>
            <person name="Karlin-Newmann G."/>
            <person name="Liu S.X."/>
            <person name="Lam B."/>
            <person name="Sakano H."/>
            <person name="Wu T."/>
            <person name="Yu G."/>
            <person name="Miranda M."/>
            <person name="Quach H.L."/>
            <person name="Tripp M."/>
            <person name="Chang C.H."/>
            <person name="Lee J.M."/>
            <person name="Toriumi M.J."/>
            <person name="Chan M.M."/>
            <person name="Tang C.C."/>
            <person name="Onodera C.S."/>
            <person name="Deng J.M."/>
            <person name="Akiyama K."/>
            <person name="Ansari Y."/>
            <person name="Arakawa T."/>
            <person name="Banh J."/>
            <person name="Banno F."/>
            <person name="Bowser L."/>
            <person name="Brooks S.Y."/>
            <person name="Carninci P."/>
            <person name="Chao Q."/>
            <person name="Choy N."/>
            <person name="Enju A."/>
            <person name="Goldsmith A.D."/>
            <person name="Gurjal M."/>
            <person name="Hansen N.F."/>
            <person name="Hayashizaki Y."/>
            <person name="Johnson-Hopson C."/>
            <person name="Hsuan V.W."/>
            <person name="Iida K."/>
            <person name="Karnes M."/>
            <person name="Khan S."/>
            <person name="Koesema E."/>
            <person name="Ishida J."/>
            <person name="Jiang P.X."/>
            <person name="Jones T."/>
            <person name="Kawai J."/>
            <person name="Kamiya A."/>
            <person name="Meyers C."/>
            <person name="Nakajima M."/>
            <person name="Narusaka M."/>
            <person name="Seki M."/>
            <person name="Sakurai T."/>
            <person name="Satou M."/>
            <person name="Tamse R."/>
            <person name="Vaysberg M."/>
            <person name="Wallender E.K."/>
            <person name="Wong C."/>
            <person name="Yamamura Y."/>
            <person name="Yuan S."/>
            <person name="Shinozaki K."/>
            <person name="Davis R.W."/>
            <person name="Theologis A."/>
            <person name="Ecker J.R."/>
        </authorList>
    </citation>
    <scope>NUCLEOTIDE SEQUENCE [LARGE SCALE MRNA]</scope>
    <source>
        <strain>cv. Columbia</strain>
    </source>
</reference>
<reference key="6">
    <citation type="submission" date="2002-03" db="EMBL/GenBank/DDBJ databases">
        <title>Full-length cDNA from Arabidopsis thaliana.</title>
        <authorList>
            <person name="Brover V.V."/>
            <person name="Troukhan M.E."/>
            <person name="Alexandrov N.A."/>
            <person name="Lu Y.-P."/>
            <person name="Flavell R.B."/>
            <person name="Feldmann K.A."/>
        </authorList>
    </citation>
    <scope>NUCLEOTIDE SEQUENCE [LARGE SCALE MRNA]</scope>
</reference>
<reference key="7">
    <citation type="journal article" date="2015" name="Plant Physiol.">
        <title>A single amino acid substitution in an ORANGE protein promotes carotenoid overaccumulation in Arabidopsis.</title>
        <authorList>
            <person name="Yuan H."/>
            <person name="Owsiany K."/>
            <person name="Sheeja T.E."/>
            <person name="Zhou X."/>
            <person name="Rodriguez C."/>
            <person name="Li Y."/>
            <person name="Welsch R."/>
            <person name="Chayut N."/>
            <person name="Yang Y."/>
            <person name="Thannhauser T.W."/>
            <person name="Parthasarathy M.V."/>
            <person name="Xu Q."/>
            <person name="Deng X."/>
            <person name="Fei Z."/>
            <person name="Schaffer A."/>
            <person name="Katzir N."/>
            <person name="Burger J."/>
            <person name="Tadmor Y."/>
            <person name="Li L."/>
        </authorList>
    </citation>
    <scope>INTERACTION WITH OR</scope>
    <scope>SUBCELLULAR LOCATION</scope>
</reference>
<reference key="8">
    <citation type="journal article" date="2015" name="Proc. Natl. Acad. Sci. U.S.A.">
        <title>Arabidopsis OR proteins are the major posttranscriptional regulators of phytoene synthase in controlling carotenoid biosynthesis.</title>
        <authorList>
            <person name="Zhou X."/>
            <person name="Welsch R."/>
            <person name="Yang Y."/>
            <person name="Alvarez D."/>
            <person name="Riediger M."/>
            <person name="Yuan H."/>
            <person name="Fish T."/>
            <person name="Liu J."/>
            <person name="Thannhauser T.W."/>
            <person name="Li L."/>
        </authorList>
    </citation>
    <scope>FUNCTION</scope>
    <scope>CATALYTIC ACTIVITY</scope>
    <scope>INTERACTION WITH OR AND ORLIKE</scope>
    <scope>SUBCELLULAR LOCATION</scope>
</reference>
<comment type="function">
    <text evidence="3">Catalyzes the reaction from prephytoene diphosphate to phytoene.</text>
</comment>
<comment type="catalytic activity">
    <reaction evidence="3">
        <text>2 (2E,6E,10E)-geranylgeranyl diphosphate = 15-cis-phytoene + 2 diphosphate</text>
        <dbReference type="Rhea" id="RHEA:34475"/>
        <dbReference type="ChEBI" id="CHEBI:27787"/>
        <dbReference type="ChEBI" id="CHEBI:33019"/>
        <dbReference type="ChEBI" id="CHEBI:58756"/>
        <dbReference type="EC" id="2.5.1.32"/>
    </reaction>
</comment>
<comment type="pathway">
    <text evidence="7">Carotenoid biosynthesis; phytoene biosynthesis; all-trans-phytoene from geranylgeranyl diphosphate: step 1/1.</text>
</comment>
<comment type="subunit">
    <text evidence="1 3 4">Monomer (By similarity). Interacts with OR (PubMed:25675505, PubMed:26224804). Interacts with ORLIKE (PubMed:25675505).</text>
</comment>
<comment type="subcellular location">
    <subcellularLocation>
        <location evidence="3 4">Plastid</location>
        <location evidence="3 4">Chloroplast membrane</location>
        <topology evidence="7">Peripheral membrane protein</topology>
    </subcellularLocation>
</comment>
<comment type="alternative products">
    <event type="alternative splicing"/>
    <isoform>
        <id>P37271-1</id>
        <name>1</name>
        <sequence type="displayed"/>
    </isoform>
    <text>A number of isoforms are produced. According to EST sequences.</text>
</comment>
<comment type="similarity">
    <text evidence="7">Belongs to the phytoene/squalene synthase family.</text>
</comment>
<proteinExistence type="evidence at protein level"/>
<sequence>MSSSVAVLWVATSSLNPDPMNNCGLVRVLESSRLFSPCQNQRLNKGKKKQIPTWSSSFVRNRSRRIGVVSSSLVASPSGEIALSSEEKVYNVVLKQAALVNKQLRSSSYDLDVKKPQDVVLPGSLSLLGEAYDRCGEVCAEYAKTFYLGTLLMTPERRKAIWAIYVWCRRTDELVDGPNASHITPMALDRWEARLEDLFRGRPFDMLDAALADTVARYPVDIQPFRDMIEGMRMDLKKSRYQNFDDLYLYCYYVAGTVGLMSVPVMGIDPKSKATTESVYNAALALGIANQLTNILRDVGEDARRGRVYLPQDELAQAGLSDEDIFAGKVTDKWRNFMKMQLKRARMFFDEAEKGVTELSAASRWPVWASLLLYRRILDEIEANDYNNFTKRAYVGKVKKIAALPLAYAKSVLKTSSSRLSI</sequence>
<keyword id="KW-0025">Alternative splicing</keyword>
<keyword id="KW-0125">Carotenoid biosynthesis</keyword>
<keyword id="KW-0150">Chloroplast</keyword>
<keyword id="KW-0414">Isoprene biosynthesis</keyword>
<keyword id="KW-0472">Membrane</keyword>
<keyword id="KW-0934">Plastid</keyword>
<keyword id="KW-1185">Reference proteome</keyword>
<keyword id="KW-0808">Transferase</keyword>
<keyword id="KW-0809">Transit peptide</keyword>
<organism>
    <name type="scientific">Arabidopsis thaliana</name>
    <name type="common">Mouse-ear cress</name>
    <dbReference type="NCBI Taxonomy" id="3702"/>
    <lineage>
        <taxon>Eukaryota</taxon>
        <taxon>Viridiplantae</taxon>
        <taxon>Streptophyta</taxon>
        <taxon>Embryophyta</taxon>
        <taxon>Tracheophyta</taxon>
        <taxon>Spermatophyta</taxon>
        <taxon>Magnoliopsida</taxon>
        <taxon>eudicotyledons</taxon>
        <taxon>Gunneridae</taxon>
        <taxon>Pentapetalae</taxon>
        <taxon>rosids</taxon>
        <taxon>malvids</taxon>
        <taxon>Brassicales</taxon>
        <taxon>Brassicaceae</taxon>
        <taxon>Camelineae</taxon>
        <taxon>Arabidopsis</taxon>
    </lineage>
</organism>